<name>PGFRL_HUMAN</name>
<proteinExistence type="evidence at protein level"/>
<comment type="subunit">
    <text>Forms a complex composed of PDGFRL, TNK2 and GRB2.</text>
</comment>
<comment type="subcellular location">
    <subcellularLocation>
        <location evidence="6">Secreted</location>
    </subcellularLocation>
</comment>
<comment type="tissue specificity">
    <text evidence="5">Expressed in colon, lung and liver.</text>
</comment>
<comment type="disease" evidence="5">
    <disease id="DI-01359">
        <name>Colorectal cancer</name>
        <acronym>CRC</acronym>
        <description>A complex disease characterized by malignant lesions arising from the inner wall of the large intestine (the colon) and the rectum. Genetic alterations are often associated with progression from premalignant lesion (adenoma) to invasive adenocarcinoma. Risk factors for cancer of the colon and rectum include colon polyps, long-standing ulcerative colitis, and genetic family history.</description>
        <dbReference type="MIM" id="114500"/>
    </disease>
    <text>The gene represented in this entry is involved in disease pathogenesis.</text>
</comment>
<comment type="disease">
    <text evidence="4">A polymorphism in PDGFRL has been reported to be associated with susceptibility to Behcet disease (PubMed:22926996). Behcet disease is a complex multiple-system disorder characterized by recurrent oral ulcerations, recurrent genital ulcerations, typical skin lesions, and uveitis. Behcet disease also involves joints, blood vessels, musculoskeletal, neurological systems, and the gastrointestinal tract.</text>
</comment>
<reference key="1">
    <citation type="journal article" date="1995" name="Oncogene">
        <title>Isolation of a candidate tumor suppressor gene on chromosome 8p21.3-p22 that is homologous to an extracellular domain of the PDGF receptor beta gene.</title>
        <authorList>
            <person name="Fujiwara Y."/>
            <person name="Ohata H."/>
            <person name="Kuroki T."/>
            <person name="Koyama K."/>
            <person name="Tsuchiya E."/>
            <person name="Monden M."/>
            <person name="Nakamura Y."/>
        </authorList>
    </citation>
    <scope>NUCLEOTIDE SEQUENCE [MRNA]</scope>
    <scope>VARIANT CRC TYR-23</scope>
    <scope>TISSUE SPECIFICITY</scope>
    <source>
        <tissue>Fetal lung</tissue>
    </source>
</reference>
<reference key="2">
    <citation type="submission" date="2004-06" db="EMBL/GenBank/DDBJ databases">
        <title>Cloning of human full open reading frames in Gateway(TM) system entry vector (pDONR201).</title>
        <authorList>
            <person name="Ebert L."/>
            <person name="Schick M."/>
            <person name="Neubert P."/>
            <person name="Schatten R."/>
            <person name="Henze S."/>
            <person name="Korn B."/>
        </authorList>
    </citation>
    <scope>NUCLEOTIDE SEQUENCE [LARGE SCALE MRNA]</scope>
</reference>
<reference key="3">
    <citation type="journal article" date="2004" name="Nat. Genet.">
        <title>Complete sequencing and characterization of 21,243 full-length human cDNAs.</title>
        <authorList>
            <person name="Ota T."/>
            <person name="Suzuki Y."/>
            <person name="Nishikawa T."/>
            <person name="Otsuki T."/>
            <person name="Sugiyama T."/>
            <person name="Irie R."/>
            <person name="Wakamatsu A."/>
            <person name="Hayashi K."/>
            <person name="Sato H."/>
            <person name="Nagai K."/>
            <person name="Kimura K."/>
            <person name="Makita H."/>
            <person name="Sekine M."/>
            <person name="Obayashi M."/>
            <person name="Nishi T."/>
            <person name="Shibahara T."/>
            <person name="Tanaka T."/>
            <person name="Ishii S."/>
            <person name="Yamamoto J."/>
            <person name="Saito K."/>
            <person name="Kawai Y."/>
            <person name="Isono Y."/>
            <person name="Nakamura Y."/>
            <person name="Nagahari K."/>
            <person name="Murakami K."/>
            <person name="Yasuda T."/>
            <person name="Iwayanagi T."/>
            <person name="Wagatsuma M."/>
            <person name="Shiratori A."/>
            <person name="Sudo H."/>
            <person name="Hosoiri T."/>
            <person name="Kaku Y."/>
            <person name="Kodaira H."/>
            <person name="Kondo H."/>
            <person name="Sugawara M."/>
            <person name="Takahashi M."/>
            <person name="Kanda K."/>
            <person name="Yokoi T."/>
            <person name="Furuya T."/>
            <person name="Kikkawa E."/>
            <person name="Omura Y."/>
            <person name="Abe K."/>
            <person name="Kamihara K."/>
            <person name="Katsuta N."/>
            <person name="Sato K."/>
            <person name="Tanikawa M."/>
            <person name="Yamazaki M."/>
            <person name="Ninomiya K."/>
            <person name="Ishibashi T."/>
            <person name="Yamashita H."/>
            <person name="Murakawa K."/>
            <person name="Fujimori K."/>
            <person name="Tanai H."/>
            <person name="Kimata M."/>
            <person name="Watanabe M."/>
            <person name="Hiraoka S."/>
            <person name="Chiba Y."/>
            <person name="Ishida S."/>
            <person name="Ono Y."/>
            <person name="Takiguchi S."/>
            <person name="Watanabe S."/>
            <person name="Yosida M."/>
            <person name="Hotuta T."/>
            <person name="Kusano J."/>
            <person name="Kanehori K."/>
            <person name="Takahashi-Fujii A."/>
            <person name="Hara H."/>
            <person name="Tanase T.-O."/>
            <person name="Nomura Y."/>
            <person name="Togiya S."/>
            <person name="Komai F."/>
            <person name="Hara R."/>
            <person name="Takeuchi K."/>
            <person name="Arita M."/>
            <person name="Imose N."/>
            <person name="Musashino K."/>
            <person name="Yuuki H."/>
            <person name="Oshima A."/>
            <person name="Sasaki N."/>
            <person name="Aotsuka S."/>
            <person name="Yoshikawa Y."/>
            <person name="Matsunawa H."/>
            <person name="Ichihara T."/>
            <person name="Shiohata N."/>
            <person name="Sano S."/>
            <person name="Moriya S."/>
            <person name="Momiyama H."/>
            <person name="Satoh N."/>
            <person name="Takami S."/>
            <person name="Terashima Y."/>
            <person name="Suzuki O."/>
            <person name="Nakagawa S."/>
            <person name="Senoh A."/>
            <person name="Mizoguchi H."/>
            <person name="Goto Y."/>
            <person name="Shimizu F."/>
            <person name="Wakebe H."/>
            <person name="Hishigaki H."/>
            <person name="Watanabe T."/>
            <person name="Sugiyama A."/>
            <person name="Takemoto M."/>
            <person name="Kawakami B."/>
            <person name="Yamazaki M."/>
            <person name="Watanabe K."/>
            <person name="Kumagai A."/>
            <person name="Itakura S."/>
            <person name="Fukuzumi Y."/>
            <person name="Fujimori Y."/>
            <person name="Komiyama M."/>
            <person name="Tashiro H."/>
            <person name="Tanigami A."/>
            <person name="Fujiwara T."/>
            <person name="Ono T."/>
            <person name="Yamada K."/>
            <person name="Fujii Y."/>
            <person name="Ozaki K."/>
            <person name="Hirao M."/>
            <person name="Ohmori Y."/>
            <person name="Kawabata A."/>
            <person name="Hikiji T."/>
            <person name="Kobatake N."/>
            <person name="Inagaki H."/>
            <person name="Ikema Y."/>
            <person name="Okamoto S."/>
            <person name="Okitani R."/>
            <person name="Kawakami T."/>
            <person name="Noguchi S."/>
            <person name="Itoh T."/>
            <person name="Shigeta K."/>
            <person name="Senba T."/>
            <person name="Matsumura K."/>
            <person name="Nakajima Y."/>
            <person name="Mizuno T."/>
            <person name="Morinaga M."/>
            <person name="Sasaki M."/>
            <person name="Togashi T."/>
            <person name="Oyama M."/>
            <person name="Hata H."/>
            <person name="Watanabe M."/>
            <person name="Komatsu T."/>
            <person name="Mizushima-Sugano J."/>
            <person name="Satoh T."/>
            <person name="Shirai Y."/>
            <person name="Takahashi Y."/>
            <person name="Nakagawa K."/>
            <person name="Okumura K."/>
            <person name="Nagase T."/>
            <person name="Nomura N."/>
            <person name="Kikuchi H."/>
            <person name="Masuho Y."/>
            <person name="Yamashita R."/>
            <person name="Nakai K."/>
            <person name="Yada T."/>
            <person name="Nakamura Y."/>
            <person name="Ohara O."/>
            <person name="Isogai T."/>
            <person name="Sugano S."/>
        </authorList>
    </citation>
    <scope>NUCLEOTIDE SEQUENCE [LARGE SCALE MRNA]</scope>
    <source>
        <tissue>Urinary bladder</tissue>
    </source>
</reference>
<reference key="4">
    <citation type="submission" date="2005-09" db="EMBL/GenBank/DDBJ databases">
        <authorList>
            <person name="Mural R.J."/>
            <person name="Istrail S."/>
            <person name="Sutton G.G."/>
            <person name="Florea L."/>
            <person name="Halpern A.L."/>
            <person name="Mobarry C.M."/>
            <person name="Lippert R."/>
            <person name="Walenz B."/>
            <person name="Shatkay H."/>
            <person name="Dew I."/>
            <person name="Miller J.R."/>
            <person name="Flanigan M.J."/>
            <person name="Edwards N.J."/>
            <person name="Bolanos R."/>
            <person name="Fasulo D."/>
            <person name="Halldorsson B.V."/>
            <person name="Hannenhalli S."/>
            <person name="Turner R."/>
            <person name="Yooseph S."/>
            <person name="Lu F."/>
            <person name="Nusskern D.R."/>
            <person name="Shue B.C."/>
            <person name="Zheng X.H."/>
            <person name="Zhong F."/>
            <person name="Delcher A.L."/>
            <person name="Huson D.H."/>
            <person name="Kravitz S.A."/>
            <person name="Mouchard L."/>
            <person name="Reinert K."/>
            <person name="Remington K.A."/>
            <person name="Clark A.G."/>
            <person name="Waterman M.S."/>
            <person name="Eichler E.E."/>
            <person name="Adams M.D."/>
            <person name="Hunkapiller M.W."/>
            <person name="Myers E.W."/>
            <person name="Venter J.C."/>
        </authorList>
    </citation>
    <scope>NUCLEOTIDE SEQUENCE [LARGE SCALE GENOMIC DNA]</scope>
</reference>
<reference key="5">
    <citation type="journal article" date="2004" name="Genome Res.">
        <title>The status, quality, and expansion of the NIH full-length cDNA project: the Mammalian Gene Collection (MGC).</title>
        <authorList>
            <consortium name="The MGC Project Team"/>
        </authorList>
    </citation>
    <scope>NUCLEOTIDE SEQUENCE [LARGE SCALE MRNA]</scope>
    <source>
        <tissue>Brain</tissue>
    </source>
</reference>
<reference key="6">
    <citation type="journal article" date="2009" name="J. Biol. Chem.">
        <title>Cytoplasmic ACK1 interaction with multiple receptor tyrosine kinases is mediated by Grb2: an analysis of ACK1 effects on Axl signaling.</title>
        <authorList>
            <person name="Pao-Chun L."/>
            <person name="Chan P.M."/>
            <person name="Chan W."/>
            <person name="Manser E."/>
        </authorList>
    </citation>
    <scope>INTERACTION WITH GRB2 AND TNK2</scope>
</reference>
<reference key="7">
    <citation type="journal article" date="2013" name="Hum. Mutat.">
        <title>Genetic variant on PDGFRL associated with Behcet disease in Chinese Han populations.</title>
        <authorList>
            <person name="Hou S."/>
            <person name="Xiao X."/>
            <person name="Zhou Y."/>
            <person name="Zhu X."/>
            <person name="Li F."/>
            <person name="Kijlstra A."/>
            <person name="Yang P."/>
        </authorList>
    </citation>
    <scope>POSSIBLE INVOLVEMENT IN SUSCEPTIBILITY TO BEHCET DISEASE</scope>
</reference>
<keyword id="KW-0225">Disease variant</keyword>
<keyword id="KW-1015">Disulfide bond</keyword>
<keyword id="KW-0325">Glycoprotein</keyword>
<keyword id="KW-0393">Immunoglobulin domain</keyword>
<keyword id="KW-1267">Proteomics identification</keyword>
<keyword id="KW-1185">Reference proteome</keyword>
<keyword id="KW-0677">Repeat</keyword>
<keyword id="KW-0964">Secreted</keyword>
<keyword id="KW-0732">Signal</keyword>
<feature type="signal peptide" evidence="1">
    <location>
        <begin position="1"/>
        <end position="21"/>
    </location>
</feature>
<feature type="chain" id="PRO_0000233090" description="Platelet-derived growth factor receptor-like protein">
    <location>
        <begin position="22"/>
        <end position="375"/>
    </location>
</feature>
<feature type="domain" description="Ig-like C2-type 1">
    <location>
        <begin position="62"/>
        <end position="159"/>
    </location>
</feature>
<feature type="domain" description="Ig-like C2-type 2">
    <location>
        <begin position="272"/>
        <end position="375"/>
    </location>
</feature>
<feature type="region of interest" description="Disordered" evidence="3">
    <location>
        <begin position="22"/>
        <end position="64"/>
    </location>
</feature>
<feature type="compositionally biased region" description="Basic residues" evidence="3">
    <location>
        <begin position="40"/>
        <end position="50"/>
    </location>
</feature>
<feature type="glycosylation site" description="N-linked (GlcNAc...) asparagine" evidence="1">
    <location>
        <position position="132"/>
    </location>
</feature>
<feature type="glycosylation site" description="N-linked (GlcNAc...) asparagine" evidence="1">
    <location>
        <position position="219"/>
    </location>
</feature>
<feature type="disulfide bond" evidence="2">
    <location>
        <begin position="96"/>
        <end position="143"/>
    </location>
</feature>
<feature type="disulfide bond" evidence="2">
    <location>
        <begin position="293"/>
        <end position="357"/>
    </location>
</feature>
<feature type="sequence variant" id="VAR_026052" description="In CRC; somatic mutation; dbSNP:rs137853148." evidence="5">
    <original>H</original>
    <variation>Y</variation>
    <location>
        <position position="23"/>
    </location>
</feature>
<feature type="sequence conflict" description="In Ref. 2; CAG46750." evidence="6" ref="2">
    <original>M</original>
    <variation>I</variation>
    <location>
        <position position="227"/>
    </location>
</feature>
<gene>
    <name type="primary">PDGFRL</name>
    <name type="synonym">PRLTS</name>
</gene>
<dbReference type="EMBL" id="D37965">
    <property type="protein sequence ID" value="BAA07179.1"/>
    <property type="molecule type" value="mRNA"/>
</dbReference>
<dbReference type="EMBL" id="CR541952">
    <property type="protein sequence ID" value="CAG46750.1"/>
    <property type="molecule type" value="mRNA"/>
</dbReference>
<dbReference type="EMBL" id="AK289450">
    <property type="protein sequence ID" value="BAF82139.1"/>
    <property type="molecule type" value="mRNA"/>
</dbReference>
<dbReference type="EMBL" id="CH471080">
    <property type="protein sequence ID" value="EAW63811.1"/>
    <property type="molecule type" value="Genomic_DNA"/>
</dbReference>
<dbReference type="EMBL" id="BC010927">
    <property type="protein sequence ID" value="AAH10927.1"/>
    <property type="molecule type" value="mRNA"/>
</dbReference>
<dbReference type="CCDS" id="CCDS6003.1"/>
<dbReference type="PIR" id="I60125">
    <property type="entry name" value="I60125"/>
</dbReference>
<dbReference type="RefSeq" id="NP_001359002.1">
    <property type="nucleotide sequence ID" value="NM_001372073.1"/>
</dbReference>
<dbReference type="RefSeq" id="NP_006198.1">
    <property type="nucleotide sequence ID" value="NM_006207.2"/>
</dbReference>
<dbReference type="BioGRID" id="111183">
    <property type="interactions" value="43"/>
</dbReference>
<dbReference type="FunCoup" id="Q15198">
    <property type="interactions" value="10"/>
</dbReference>
<dbReference type="IntAct" id="Q15198">
    <property type="interactions" value="41"/>
</dbReference>
<dbReference type="MINT" id="Q15198"/>
<dbReference type="STRING" id="9606.ENSP00000444211"/>
<dbReference type="TCDB" id="8.A.23.1.55">
    <property type="family name" value="the basigin (basigin) family"/>
</dbReference>
<dbReference type="GlyConnect" id="1609">
    <property type="glycosylation" value="3 N-Linked glycans (1 site)"/>
</dbReference>
<dbReference type="GlyCosmos" id="Q15198">
    <property type="glycosylation" value="2 sites, 2 glycans"/>
</dbReference>
<dbReference type="GlyGen" id="Q15198">
    <property type="glycosylation" value="2 sites, 3 N-linked glycans (1 site)"/>
</dbReference>
<dbReference type="iPTMnet" id="Q15198"/>
<dbReference type="PhosphoSitePlus" id="Q15198"/>
<dbReference type="BioMuta" id="PDGFRL"/>
<dbReference type="DMDM" id="74762141"/>
<dbReference type="jPOST" id="Q15198"/>
<dbReference type="MassIVE" id="Q15198"/>
<dbReference type="PaxDb" id="9606-ENSP00000444211"/>
<dbReference type="PeptideAtlas" id="Q15198"/>
<dbReference type="ProteomicsDB" id="60488"/>
<dbReference type="Antibodypedia" id="22286">
    <property type="antibodies" value="250 antibodies from 31 providers"/>
</dbReference>
<dbReference type="DNASU" id="5157"/>
<dbReference type="Ensembl" id="ENST00000251630.11">
    <property type="protein sequence ID" value="ENSP00000251630.4"/>
    <property type="gene ID" value="ENSG00000104213.13"/>
</dbReference>
<dbReference type="Ensembl" id="ENST00000541323.1">
    <property type="protein sequence ID" value="ENSP00000444211.1"/>
    <property type="gene ID" value="ENSG00000104213.13"/>
</dbReference>
<dbReference type="GeneID" id="5157"/>
<dbReference type="KEGG" id="hsa:5157"/>
<dbReference type="MANE-Select" id="ENST00000251630.11">
    <property type="protein sequence ID" value="ENSP00000251630.4"/>
    <property type="RefSeq nucleotide sequence ID" value="NM_001372073.1"/>
    <property type="RefSeq protein sequence ID" value="NP_001359002.1"/>
</dbReference>
<dbReference type="UCSC" id="uc003wxr.3">
    <property type="organism name" value="human"/>
</dbReference>
<dbReference type="AGR" id="HGNC:8805"/>
<dbReference type="CTD" id="5157"/>
<dbReference type="DisGeNET" id="5157"/>
<dbReference type="GeneCards" id="PDGFRL"/>
<dbReference type="HGNC" id="HGNC:8805">
    <property type="gene designation" value="PDGFRL"/>
</dbReference>
<dbReference type="HPA" id="ENSG00000104213">
    <property type="expression patterns" value="Tissue enhanced (ovary)"/>
</dbReference>
<dbReference type="MalaCards" id="PDGFRL"/>
<dbReference type="MIM" id="114500">
    <property type="type" value="phenotype"/>
</dbReference>
<dbReference type="MIM" id="604584">
    <property type="type" value="gene"/>
</dbReference>
<dbReference type="neXtProt" id="NX_Q15198"/>
<dbReference type="OpenTargets" id="ENSG00000104213"/>
<dbReference type="Orphanet" id="210159">
    <property type="disease" value="Adult hepatocellular carcinoma"/>
</dbReference>
<dbReference type="PharmGKB" id="PA33149"/>
<dbReference type="VEuPathDB" id="HostDB:ENSG00000104213"/>
<dbReference type="eggNOG" id="KOG0200">
    <property type="taxonomic scope" value="Eukaryota"/>
</dbReference>
<dbReference type="GeneTree" id="ENSGT00390000017153"/>
<dbReference type="HOGENOM" id="CLU_062833_0_0_1"/>
<dbReference type="InParanoid" id="Q15198"/>
<dbReference type="OMA" id="CWGQLCN"/>
<dbReference type="OrthoDB" id="9864753at2759"/>
<dbReference type="PAN-GO" id="Q15198">
    <property type="GO annotations" value="0 GO annotations based on evolutionary models"/>
</dbReference>
<dbReference type="PhylomeDB" id="Q15198"/>
<dbReference type="TreeFam" id="TF334735"/>
<dbReference type="PathwayCommons" id="Q15198"/>
<dbReference type="SignaLink" id="Q15198"/>
<dbReference type="BioGRID-ORCS" id="5157">
    <property type="hits" value="10 hits in 1152 CRISPR screens"/>
</dbReference>
<dbReference type="ChiTaRS" id="PDGFRL">
    <property type="organism name" value="human"/>
</dbReference>
<dbReference type="GenomeRNAi" id="5157"/>
<dbReference type="Pharos" id="Q15198">
    <property type="development level" value="Tbio"/>
</dbReference>
<dbReference type="PRO" id="PR:Q15198"/>
<dbReference type="Proteomes" id="UP000005640">
    <property type="component" value="Chromosome 8"/>
</dbReference>
<dbReference type="RNAct" id="Q15198">
    <property type="molecule type" value="protein"/>
</dbReference>
<dbReference type="Bgee" id="ENSG00000104213">
    <property type="expression patterns" value="Expressed in pericardium and 166 other cell types or tissues"/>
</dbReference>
<dbReference type="ExpressionAtlas" id="Q15198">
    <property type="expression patterns" value="baseline and differential"/>
</dbReference>
<dbReference type="GO" id="GO:0005576">
    <property type="term" value="C:extracellular region"/>
    <property type="evidence" value="ECO:0007669"/>
    <property type="project" value="UniProtKB-SubCell"/>
</dbReference>
<dbReference type="GO" id="GO:0004992">
    <property type="term" value="F:platelet activating factor receptor activity"/>
    <property type="evidence" value="ECO:0000304"/>
    <property type="project" value="ProtInc"/>
</dbReference>
<dbReference type="GO" id="GO:0005019">
    <property type="term" value="F:platelet-derived growth factor beta-receptor activity"/>
    <property type="evidence" value="ECO:0000304"/>
    <property type="project" value="ProtInc"/>
</dbReference>
<dbReference type="FunFam" id="2.60.40.10:FF:000223">
    <property type="entry name" value="Platelet-derived growth factor receptor beta"/>
    <property type="match status" value="1"/>
</dbReference>
<dbReference type="FunFam" id="2.60.40.10:FF:000907">
    <property type="entry name" value="Platelet-derived growth factor receptor-like protein"/>
    <property type="match status" value="1"/>
</dbReference>
<dbReference type="FunFam" id="2.60.40.10:FF:001395">
    <property type="entry name" value="Platelet-derived growth factor receptor-like protein"/>
    <property type="match status" value="1"/>
</dbReference>
<dbReference type="Gene3D" id="2.60.40.10">
    <property type="entry name" value="Immunoglobulins"/>
    <property type="match status" value="3"/>
</dbReference>
<dbReference type="InterPro" id="IPR007110">
    <property type="entry name" value="Ig-like_dom"/>
</dbReference>
<dbReference type="InterPro" id="IPR036179">
    <property type="entry name" value="Ig-like_dom_sf"/>
</dbReference>
<dbReference type="InterPro" id="IPR013783">
    <property type="entry name" value="Ig-like_fold"/>
</dbReference>
<dbReference type="InterPro" id="IPR003599">
    <property type="entry name" value="Ig_sub"/>
</dbReference>
<dbReference type="InterPro" id="IPR003598">
    <property type="entry name" value="Ig_sub2"/>
</dbReference>
<dbReference type="InterPro" id="IPR042495">
    <property type="entry name" value="PDGFRL"/>
</dbReference>
<dbReference type="PANTHER" id="PTHR15360">
    <property type="entry name" value="PLATELET-DERIVED GROWTH FACTOR RECEPTOR LIKE"/>
    <property type="match status" value="1"/>
</dbReference>
<dbReference type="PANTHER" id="PTHR15360:SF1">
    <property type="entry name" value="PLATELET-DERIVED GROWTH FACTOR RECEPTOR-LIKE PROTEIN"/>
    <property type="match status" value="1"/>
</dbReference>
<dbReference type="Pfam" id="PF13927">
    <property type="entry name" value="Ig_3"/>
    <property type="match status" value="1"/>
</dbReference>
<dbReference type="Pfam" id="PF21339">
    <property type="entry name" value="VEGFR-1-like_Ig-like"/>
    <property type="match status" value="1"/>
</dbReference>
<dbReference type="SMART" id="SM00409">
    <property type="entry name" value="IG"/>
    <property type="match status" value="2"/>
</dbReference>
<dbReference type="SMART" id="SM00408">
    <property type="entry name" value="IGc2"/>
    <property type="match status" value="2"/>
</dbReference>
<dbReference type="SUPFAM" id="SSF48726">
    <property type="entry name" value="Immunoglobulin"/>
    <property type="match status" value="3"/>
</dbReference>
<dbReference type="PROSITE" id="PS50835">
    <property type="entry name" value="IG_LIKE"/>
    <property type="match status" value="2"/>
</dbReference>
<organism>
    <name type="scientific">Homo sapiens</name>
    <name type="common">Human</name>
    <dbReference type="NCBI Taxonomy" id="9606"/>
    <lineage>
        <taxon>Eukaryota</taxon>
        <taxon>Metazoa</taxon>
        <taxon>Chordata</taxon>
        <taxon>Craniata</taxon>
        <taxon>Vertebrata</taxon>
        <taxon>Euteleostomi</taxon>
        <taxon>Mammalia</taxon>
        <taxon>Eutheria</taxon>
        <taxon>Euarchontoglires</taxon>
        <taxon>Primates</taxon>
        <taxon>Haplorrhini</taxon>
        <taxon>Catarrhini</taxon>
        <taxon>Hominidae</taxon>
        <taxon>Homo</taxon>
    </lineage>
</organism>
<evidence type="ECO:0000255" key="1"/>
<evidence type="ECO:0000255" key="2">
    <source>
        <dbReference type="PROSITE-ProRule" id="PRU00114"/>
    </source>
</evidence>
<evidence type="ECO:0000256" key="3">
    <source>
        <dbReference type="SAM" id="MobiDB-lite"/>
    </source>
</evidence>
<evidence type="ECO:0000269" key="4">
    <source>
    </source>
</evidence>
<evidence type="ECO:0000269" key="5">
    <source>
    </source>
</evidence>
<evidence type="ECO:0000305" key="6"/>
<sequence>MKVWLLLGLLLVHEALEDVTGQHLPKNKRPKEPGENRIKPTNKKVKPKIPKMKDRDSANSAPKTQSIMMQVLDKGRFQKPAATLSLLAGQTVELRCKGSRIGWSYPAYLDTFKDSRLSVKQNERYGQLTLVNSTSADTGEFSCWVQLCSGYICRKDEAKTGSTYIFFTEKGELFVPSPSYFDVVYLNPDRQAVVPCRVTVLSAKVTLHREFPAKEIPANGTDIVYDMKRGFVYLQPHSEHQGVVYCRAEAGGRSQISVKYQLLYVAVPSGPPSTTILASSNKVKSGDDISVLCTVLGEPDVEVEFTWIFPGQKDERPVTIQDTWRLIHRGLGHTTRISQSVITVEDFETIDAGYYICTAQNLQGQTTVATTVEFS</sequence>
<protein>
    <recommendedName>
        <fullName>Platelet-derived growth factor receptor-like protein</fullName>
        <shortName>PDGFR-like protein</shortName>
    </recommendedName>
    <alternativeName>
        <fullName>PDGF receptor beta-like tumor suppressor</fullName>
    </alternativeName>
</protein>
<accession>Q15198</accession>
<accession>A8K085</accession>
<accession>Q6FH04</accession>